<organism>
    <name type="scientific">Helicobacter pylori (strain ATCC 700392 / 26695)</name>
    <name type="common">Campylobacter pylori</name>
    <dbReference type="NCBI Taxonomy" id="85962"/>
    <lineage>
        <taxon>Bacteria</taxon>
        <taxon>Pseudomonadati</taxon>
        <taxon>Campylobacterota</taxon>
        <taxon>Epsilonproteobacteria</taxon>
        <taxon>Campylobacterales</taxon>
        <taxon>Helicobacteraceae</taxon>
        <taxon>Helicobacter</taxon>
    </lineage>
</organism>
<reference key="1">
    <citation type="journal article" date="1997" name="Nature">
        <title>The complete genome sequence of the gastric pathogen Helicobacter pylori.</title>
        <authorList>
            <person name="Tomb J.-F."/>
            <person name="White O."/>
            <person name="Kerlavage A.R."/>
            <person name="Clayton R.A."/>
            <person name="Sutton G.G."/>
            <person name="Fleischmann R.D."/>
            <person name="Ketchum K.A."/>
            <person name="Klenk H.-P."/>
            <person name="Gill S.R."/>
            <person name="Dougherty B.A."/>
            <person name="Nelson K.E."/>
            <person name="Quackenbush J."/>
            <person name="Zhou L."/>
            <person name="Kirkness E.F."/>
            <person name="Peterson S.N."/>
            <person name="Loftus B.J."/>
            <person name="Richardson D.L."/>
            <person name="Dodson R.J."/>
            <person name="Khalak H.G."/>
            <person name="Glodek A."/>
            <person name="McKenney K."/>
            <person name="FitzGerald L.M."/>
            <person name="Lee N."/>
            <person name="Adams M.D."/>
            <person name="Hickey E.K."/>
            <person name="Berg D.E."/>
            <person name="Gocayne J.D."/>
            <person name="Utterback T.R."/>
            <person name="Peterson J.D."/>
            <person name="Kelley J.M."/>
            <person name="Cotton M.D."/>
            <person name="Weidman J.F."/>
            <person name="Fujii C."/>
            <person name="Bowman C."/>
            <person name="Watthey L."/>
            <person name="Wallin E."/>
            <person name="Hayes W.S."/>
            <person name="Borodovsky M."/>
            <person name="Karp P.D."/>
            <person name="Smith H.O."/>
            <person name="Fraser C.M."/>
            <person name="Venter J.C."/>
        </authorList>
    </citation>
    <scope>NUCLEOTIDE SEQUENCE [LARGE SCALE GENOMIC DNA]</scope>
    <source>
        <strain>ATCC 700392 / 26695</strain>
    </source>
</reference>
<reference key="2">
    <citation type="journal article" date="1998" name="Infect. Immun.">
        <title>Extracellular release of antigenic proteins by Helicobacter pylori.</title>
        <authorList>
            <person name="Cao P."/>
            <person name="McClain M.S."/>
            <person name="Forsyth M.H."/>
            <person name="Cover T.L."/>
        </authorList>
    </citation>
    <scope>NUCLEOTIDE SEQUENCE [GENOMIC DNA]</scope>
    <source>
        <strain>ATCC 49503 / 60190</strain>
    </source>
</reference>
<evidence type="ECO:0000250" key="1"/>
<evidence type="ECO:0000255" key="2">
    <source>
        <dbReference type="PROSITE-ProRule" id="PRU01126"/>
    </source>
</evidence>
<evidence type="ECO:0000305" key="3"/>
<evidence type="ECO:0007829" key="4">
    <source>
        <dbReference type="PDB" id="7E43"/>
    </source>
</evidence>
<accession>O25011</accession>
<accession>O85224</accession>
<dbReference type="EC" id="1.8.4.11"/>
<dbReference type="EC" id="1.8.4.12"/>
<dbReference type="EMBL" id="AE000511">
    <property type="protein sequence ID" value="AAD07291.1"/>
    <property type="molecule type" value="Genomic_DNA"/>
</dbReference>
<dbReference type="EMBL" id="AF053709">
    <property type="protein sequence ID" value="AAC24211.1"/>
    <property type="molecule type" value="Genomic_DNA"/>
</dbReference>
<dbReference type="PIR" id="H64547">
    <property type="entry name" value="H64547"/>
</dbReference>
<dbReference type="RefSeq" id="NP_207022.1">
    <property type="nucleotide sequence ID" value="NC_000915.1"/>
</dbReference>
<dbReference type="PDB" id="7E43">
    <property type="method" value="X-ray"/>
    <property type="resolution" value="2.20 A"/>
    <property type="chains" value="A/B=1-359"/>
</dbReference>
<dbReference type="PDBsum" id="7E43"/>
<dbReference type="SMR" id="O25011"/>
<dbReference type="DIP" id="DIP-3282N"/>
<dbReference type="IntAct" id="O25011">
    <property type="interactions" value="10"/>
</dbReference>
<dbReference type="MINT" id="O25011"/>
<dbReference type="STRING" id="85962.HP_0224"/>
<dbReference type="PaxDb" id="85962-C694_01130"/>
<dbReference type="EnsemblBacteria" id="AAD07291">
    <property type="protein sequence ID" value="AAD07291"/>
    <property type="gene ID" value="HP_0224"/>
</dbReference>
<dbReference type="KEGG" id="heo:C694_01130"/>
<dbReference type="KEGG" id="hpy:HP_0224"/>
<dbReference type="PATRIC" id="fig|85962.47.peg.242"/>
<dbReference type="eggNOG" id="COG0225">
    <property type="taxonomic scope" value="Bacteria"/>
</dbReference>
<dbReference type="eggNOG" id="COG0229">
    <property type="taxonomic scope" value="Bacteria"/>
</dbReference>
<dbReference type="InParanoid" id="O25011"/>
<dbReference type="OrthoDB" id="4174719at2"/>
<dbReference type="PhylomeDB" id="O25011"/>
<dbReference type="Proteomes" id="UP000000429">
    <property type="component" value="Chromosome"/>
</dbReference>
<dbReference type="GO" id="GO:0005737">
    <property type="term" value="C:cytoplasm"/>
    <property type="evidence" value="ECO:0000318"/>
    <property type="project" value="GO_Central"/>
</dbReference>
<dbReference type="GO" id="GO:0033744">
    <property type="term" value="F:L-methionine:thioredoxin-disulfide S-oxidoreductase activity"/>
    <property type="evidence" value="ECO:0007669"/>
    <property type="project" value="RHEA"/>
</dbReference>
<dbReference type="GO" id="GO:0033743">
    <property type="term" value="F:peptide-methionine (R)-S-oxide reductase activity"/>
    <property type="evidence" value="ECO:0000318"/>
    <property type="project" value="GO_Central"/>
</dbReference>
<dbReference type="GO" id="GO:0008113">
    <property type="term" value="F:peptide-methionine (S)-S-oxide reductase activity"/>
    <property type="evidence" value="ECO:0007669"/>
    <property type="project" value="UniProtKB-UniRule"/>
</dbReference>
<dbReference type="GO" id="GO:0036211">
    <property type="term" value="P:protein modification process"/>
    <property type="evidence" value="ECO:0007669"/>
    <property type="project" value="UniProtKB-UniRule"/>
</dbReference>
<dbReference type="GO" id="GO:0030091">
    <property type="term" value="P:protein repair"/>
    <property type="evidence" value="ECO:0007669"/>
    <property type="project" value="InterPro"/>
</dbReference>
<dbReference type="GO" id="GO:0006979">
    <property type="term" value="P:response to oxidative stress"/>
    <property type="evidence" value="ECO:0007669"/>
    <property type="project" value="InterPro"/>
</dbReference>
<dbReference type="FunFam" id="3.30.1060.10:FF:000007">
    <property type="entry name" value="Peptide methionine sulfoxide reductase msrA/msrB"/>
    <property type="match status" value="1"/>
</dbReference>
<dbReference type="FunFam" id="2.170.150.20:FF:000003">
    <property type="entry name" value="Peptide methionine sulfoxide reductase MsrB"/>
    <property type="match status" value="1"/>
</dbReference>
<dbReference type="Gene3D" id="2.170.150.20">
    <property type="entry name" value="Peptide methionine sulfoxide reductase"/>
    <property type="match status" value="1"/>
</dbReference>
<dbReference type="Gene3D" id="3.30.1060.10">
    <property type="entry name" value="Peptide methionine sulphoxide reductase MsrA"/>
    <property type="match status" value="1"/>
</dbReference>
<dbReference type="HAMAP" id="MF_01401">
    <property type="entry name" value="MsrA"/>
    <property type="match status" value="1"/>
</dbReference>
<dbReference type="InterPro" id="IPR002569">
    <property type="entry name" value="Met_Sox_Rdtase_MsrA_dom"/>
</dbReference>
<dbReference type="InterPro" id="IPR036509">
    <property type="entry name" value="Met_Sox_Rdtase_MsrA_sf"/>
</dbReference>
<dbReference type="InterPro" id="IPR028427">
    <property type="entry name" value="Met_Sox_Rdtase_MsrB"/>
</dbReference>
<dbReference type="InterPro" id="IPR002579">
    <property type="entry name" value="Met_Sox_Rdtase_MsrB_dom"/>
</dbReference>
<dbReference type="InterPro" id="IPR011057">
    <property type="entry name" value="Mss4-like_sf"/>
</dbReference>
<dbReference type="NCBIfam" id="TIGR00401">
    <property type="entry name" value="msrA"/>
    <property type="match status" value="1"/>
</dbReference>
<dbReference type="NCBIfam" id="TIGR00357">
    <property type="entry name" value="peptide-methionine (R)-S-oxide reductase MsrB"/>
    <property type="match status" value="1"/>
</dbReference>
<dbReference type="PANTHER" id="PTHR10173">
    <property type="entry name" value="METHIONINE SULFOXIDE REDUCTASE"/>
    <property type="match status" value="1"/>
</dbReference>
<dbReference type="PANTHER" id="PTHR10173:SF59">
    <property type="entry name" value="PEPTIDE METHIONINE SULFOXIDE REDUCTASE MSRA_MSRB"/>
    <property type="match status" value="1"/>
</dbReference>
<dbReference type="Pfam" id="PF01625">
    <property type="entry name" value="PMSR"/>
    <property type="match status" value="1"/>
</dbReference>
<dbReference type="Pfam" id="PF01641">
    <property type="entry name" value="SelR"/>
    <property type="match status" value="1"/>
</dbReference>
<dbReference type="SUPFAM" id="SSF51316">
    <property type="entry name" value="Mss4-like"/>
    <property type="match status" value="1"/>
</dbReference>
<dbReference type="SUPFAM" id="SSF55068">
    <property type="entry name" value="Peptide methionine sulfoxide reductase"/>
    <property type="match status" value="1"/>
</dbReference>
<dbReference type="PROSITE" id="PS51790">
    <property type="entry name" value="MSRB"/>
    <property type="match status" value="1"/>
</dbReference>
<proteinExistence type="evidence at protein level"/>
<protein>
    <recommendedName>
        <fullName>Peptide methionine sulfoxide reductase MsrA/MsrB</fullName>
    </recommendedName>
    <domain>
        <recommendedName>
            <fullName>Peptide methionine sulfoxide reductase MsrA</fullName>
            <shortName>Protein-methionine-S-oxide reductase</shortName>
            <ecNumber>1.8.4.11</ecNumber>
        </recommendedName>
        <alternativeName>
            <fullName>Peptide-methionine (S)-S-oxide reductase</fullName>
            <shortName>Peptide Met(O) reductase</shortName>
        </alternativeName>
    </domain>
    <domain>
        <recommendedName>
            <fullName>Peptide methionine sulfoxide reductase MsrB</fullName>
            <ecNumber>1.8.4.12</ecNumber>
        </recommendedName>
        <alternativeName>
            <fullName>Peptide-methionine (R)-S-oxide reductase</fullName>
        </alternativeName>
    </domain>
</protein>
<sequence length="359" mass="41275">MKVLSYLKNFYLFLAIGAIMQASENMGSQHQKTDERVIYLAGGCFWGLEAYMERIYGVIDASSGYANGKTSSTNYEKLHESDHAESVKVIYDPKKISLDKLLRYYFKVVDPVSVNKQGNDVGRQYRTGIYYVNSADKEVIDHALKALQKEVKGKIAIEVEPLKNYVRAEEYHQDYLKKHPSGYCHIDLKKADEVIVDDDKYTKPSDEVLKKKLTKLQYEVTQNKHTEKPFENEYYNKEEEGIYVDITTGEPLFSSADKYDSGCGWPSFSKPINKDVVKYEDDESLNRKRIEVLSRIGKAHLGHVFNDGPKELGGLRYCINSAALRFIPLKDMEKEGYGEFIPYIKKGELKKYINDKKSH</sequence>
<comment type="function">
    <text evidence="1">Has an important function as a repair enzyme for proteins that have been inactivated by oxidation. Catalyzes the reversible oxidation-reduction of methionine sulfoxide in proteins to methionine (By similarity).</text>
</comment>
<comment type="catalytic activity">
    <reaction>
        <text>L-methionyl-[protein] + [thioredoxin]-disulfide + H2O = L-methionyl-(S)-S-oxide-[protein] + [thioredoxin]-dithiol</text>
        <dbReference type="Rhea" id="RHEA:14217"/>
        <dbReference type="Rhea" id="RHEA-COMP:10698"/>
        <dbReference type="Rhea" id="RHEA-COMP:10700"/>
        <dbReference type="Rhea" id="RHEA-COMP:12313"/>
        <dbReference type="Rhea" id="RHEA-COMP:12315"/>
        <dbReference type="ChEBI" id="CHEBI:15377"/>
        <dbReference type="ChEBI" id="CHEBI:16044"/>
        <dbReference type="ChEBI" id="CHEBI:29950"/>
        <dbReference type="ChEBI" id="CHEBI:44120"/>
        <dbReference type="ChEBI" id="CHEBI:50058"/>
        <dbReference type="EC" id="1.8.4.11"/>
    </reaction>
</comment>
<comment type="catalytic activity">
    <reaction>
        <text>[thioredoxin]-disulfide + L-methionine + H2O = L-methionine (S)-S-oxide + [thioredoxin]-dithiol</text>
        <dbReference type="Rhea" id="RHEA:19993"/>
        <dbReference type="Rhea" id="RHEA-COMP:10698"/>
        <dbReference type="Rhea" id="RHEA-COMP:10700"/>
        <dbReference type="ChEBI" id="CHEBI:15377"/>
        <dbReference type="ChEBI" id="CHEBI:29950"/>
        <dbReference type="ChEBI" id="CHEBI:50058"/>
        <dbReference type="ChEBI" id="CHEBI:57844"/>
        <dbReference type="ChEBI" id="CHEBI:58772"/>
        <dbReference type="EC" id="1.8.4.11"/>
    </reaction>
</comment>
<comment type="catalytic activity">
    <reaction>
        <text>L-methionyl-[protein] + [thioredoxin]-disulfide + H2O = L-methionyl-(R)-S-oxide-[protein] + [thioredoxin]-dithiol</text>
        <dbReference type="Rhea" id="RHEA:24164"/>
        <dbReference type="Rhea" id="RHEA-COMP:10698"/>
        <dbReference type="Rhea" id="RHEA-COMP:10700"/>
        <dbReference type="Rhea" id="RHEA-COMP:12313"/>
        <dbReference type="Rhea" id="RHEA-COMP:12314"/>
        <dbReference type="ChEBI" id="CHEBI:15377"/>
        <dbReference type="ChEBI" id="CHEBI:16044"/>
        <dbReference type="ChEBI" id="CHEBI:29950"/>
        <dbReference type="ChEBI" id="CHEBI:45764"/>
        <dbReference type="ChEBI" id="CHEBI:50058"/>
        <dbReference type="EC" id="1.8.4.12"/>
    </reaction>
</comment>
<comment type="similarity">
    <text evidence="3">In the N-terminal section; belongs to the MsrA Met sulfoxide reductase family.</text>
</comment>
<comment type="similarity">
    <text evidence="3">In the C-terminal section; belongs to the MsrB Met sulfoxide reductase family.</text>
</comment>
<keyword id="KW-0002">3D-structure</keyword>
<keyword id="KW-0511">Multifunctional enzyme</keyword>
<keyword id="KW-0560">Oxidoreductase</keyword>
<keyword id="KW-1185">Reference proteome</keyword>
<feature type="chain" id="PRO_0000138515" description="Peptide methionine sulfoxide reductase MsrA/MsrB">
    <location>
        <begin position="1"/>
        <end position="359"/>
    </location>
</feature>
<feature type="domain" description="MsrB" evidence="2">
    <location>
        <begin position="206"/>
        <end position="329"/>
    </location>
</feature>
<feature type="region of interest" description="Peptide methionine sulfoxide reductase A">
    <location>
        <begin position="36"/>
        <end position="189"/>
    </location>
</feature>
<feature type="active site" evidence="1">
    <location>
        <position position="44"/>
    </location>
</feature>
<feature type="active site" description="Nucleophile" evidence="2">
    <location>
        <position position="318"/>
    </location>
</feature>
<feature type="sequence conflict" description="In Ref. 2; AAC24211." evidence="3" ref="2">
    <original>N</original>
    <variation>I</variation>
    <location>
        <position position="9"/>
    </location>
</feature>
<feature type="sequence conflict" description="In Ref. 2; AAC24211." evidence="3" ref="2">
    <original>A</original>
    <variation>L</variation>
    <location>
        <position position="15"/>
    </location>
</feature>
<feature type="sequence conflict" description="In Ref. 2; AAC24211." evidence="3" ref="2">
    <original>S</original>
    <variation>N</variation>
    <location>
        <position position="23"/>
    </location>
</feature>
<feature type="sequence conflict" description="In Ref. 2; AAC24211." evidence="3" ref="2">
    <original>A</original>
    <variation>T</variation>
    <location>
        <position position="135"/>
    </location>
</feature>
<feature type="sequence conflict" description="In Ref. 2; AAC24211." evidence="3" ref="2">
    <original>H</original>
    <variation>N</variation>
    <location>
        <position position="142"/>
    </location>
</feature>
<feature type="sequence conflict" description="In Ref. 2; AAC24211." evidence="3" ref="2">
    <original>E</original>
    <variation>K</variation>
    <location>
        <position position="170"/>
    </location>
</feature>
<feature type="sequence conflict" description="In Ref. 2; AAC24211." evidence="3" ref="2">
    <original>S</original>
    <variation>G</variation>
    <location>
        <position position="181"/>
    </location>
</feature>
<feature type="sequence conflict" description="In Ref. 2; AAC24211." evidence="3" ref="2">
    <original>D</original>
    <variation>S</variation>
    <location>
        <position position="198"/>
    </location>
</feature>
<feature type="sequence conflict" description="In Ref. 2; AAC24211." evidence="3" ref="2">
    <original>K</original>
    <variation>R</variation>
    <location>
        <position position="346"/>
    </location>
</feature>
<feature type="sequence conflict" description="In Ref. 2; AAC24211." evidence="3" ref="2">
    <original>N</original>
    <variation>Q</variation>
    <location>
        <position position="354"/>
    </location>
</feature>
<feature type="sequence conflict" description="In Ref. 2; AAC24211." evidence="3" ref="2">
    <original>S</original>
    <variation>T</variation>
    <location>
        <position position="358"/>
    </location>
</feature>
<feature type="strand" evidence="4">
    <location>
        <begin position="36"/>
        <end position="43"/>
    </location>
</feature>
<feature type="helix" evidence="4">
    <location>
        <begin position="45"/>
        <end position="53"/>
    </location>
</feature>
<feature type="strand" evidence="4">
    <location>
        <begin position="58"/>
        <end position="67"/>
    </location>
</feature>
<feature type="strand" evidence="4">
    <location>
        <begin position="69"/>
        <end position="71"/>
    </location>
</feature>
<feature type="helix" evidence="4">
    <location>
        <begin position="75"/>
        <end position="77"/>
    </location>
</feature>
<feature type="helix" evidence="4">
    <location>
        <begin position="78"/>
        <end position="81"/>
    </location>
</feature>
<feature type="strand" evidence="4">
    <location>
        <begin position="84"/>
        <end position="91"/>
    </location>
</feature>
<feature type="turn" evidence="4">
    <location>
        <begin position="93"/>
        <end position="95"/>
    </location>
</feature>
<feature type="helix" evidence="4">
    <location>
        <begin position="98"/>
        <end position="106"/>
    </location>
</feature>
<feature type="strand" evidence="4">
    <location>
        <begin position="114"/>
        <end position="117"/>
    </location>
</feature>
<feature type="strand" evidence="4">
    <location>
        <begin position="120"/>
        <end position="122"/>
    </location>
</feature>
<feature type="helix" evidence="4">
    <location>
        <begin position="123"/>
        <end position="125"/>
    </location>
</feature>
<feature type="strand" evidence="4">
    <location>
        <begin position="127"/>
        <end position="133"/>
    </location>
</feature>
<feature type="helix" evidence="4">
    <location>
        <begin position="136"/>
        <end position="151"/>
    </location>
</feature>
<feature type="strand" evidence="4">
    <location>
        <begin position="158"/>
        <end position="161"/>
    </location>
</feature>
<feature type="strand" evidence="4">
    <location>
        <begin position="165"/>
        <end position="167"/>
    </location>
</feature>
<feature type="turn" evidence="4">
    <location>
        <begin position="170"/>
        <end position="174"/>
    </location>
</feature>
<feature type="helix" evidence="4">
    <location>
        <begin position="175"/>
        <end position="178"/>
    </location>
</feature>
<feature type="helix" evidence="4">
    <location>
        <begin position="188"/>
        <end position="192"/>
    </location>
</feature>
<feature type="helix" evidence="4">
    <location>
        <begin position="206"/>
        <end position="212"/>
    </location>
</feature>
<feature type="helix" evidence="4">
    <location>
        <begin position="215"/>
        <end position="223"/>
    </location>
</feature>
<feature type="strand" evidence="4">
    <location>
        <begin position="231"/>
        <end position="234"/>
    </location>
</feature>
<feature type="strand" evidence="4">
    <location>
        <begin position="240"/>
        <end position="245"/>
    </location>
</feature>
<feature type="turn" evidence="4">
    <location>
        <begin position="246"/>
        <end position="248"/>
    </location>
</feature>
<feature type="strand" evidence="4">
    <location>
        <begin position="251"/>
        <end position="254"/>
    </location>
</feature>
<feature type="helix" evidence="4">
    <location>
        <begin position="255"/>
        <end position="257"/>
    </location>
</feature>
<feature type="strand" evidence="4">
    <location>
        <begin position="262"/>
        <end position="265"/>
    </location>
</feature>
<feature type="strand" evidence="4">
    <location>
        <begin position="267"/>
        <end position="270"/>
    </location>
</feature>
<feature type="strand" evidence="4">
    <location>
        <begin position="272"/>
        <end position="282"/>
    </location>
</feature>
<feature type="helix" evidence="4">
    <location>
        <begin position="284"/>
        <end position="286"/>
    </location>
</feature>
<feature type="strand" evidence="4">
    <location>
        <begin position="289"/>
        <end position="294"/>
    </location>
</feature>
<feature type="turn" evidence="4">
    <location>
        <begin position="295"/>
        <end position="297"/>
    </location>
</feature>
<feature type="strand" evidence="4">
    <location>
        <begin position="300"/>
        <end position="306"/>
    </location>
</feature>
<feature type="helix" evidence="4">
    <location>
        <begin position="310"/>
        <end position="312"/>
    </location>
</feature>
<feature type="strand" evidence="4">
    <location>
        <begin position="316"/>
        <end position="319"/>
    </location>
</feature>
<feature type="helix" evidence="4">
    <location>
        <begin position="321"/>
        <end position="323"/>
    </location>
</feature>
<feature type="strand" evidence="4">
    <location>
        <begin position="324"/>
        <end position="328"/>
    </location>
</feature>
<feature type="helix" evidence="4">
    <location>
        <begin position="329"/>
        <end position="331"/>
    </location>
</feature>
<feature type="turn" evidence="4">
    <location>
        <begin position="332"/>
        <end position="336"/>
    </location>
</feature>
<feature type="helix" evidence="4">
    <location>
        <begin position="338"/>
        <end position="340"/>
    </location>
</feature>
<feature type="helix" evidence="4">
    <location>
        <begin position="341"/>
        <end position="354"/>
    </location>
</feature>
<name>MSRAB_HELPY</name>
<gene>
    <name type="primary">msrAB</name>
    <name type="synonym">msrA</name>
    <name type="ordered locus">HP_0224</name>
</gene>